<dbReference type="EC" id="3.1.-.-"/>
<dbReference type="EMBL" id="BA000022">
    <property type="protein sequence ID" value="BAA17203.1"/>
    <property type="molecule type" value="Genomic_DNA"/>
</dbReference>
<dbReference type="PIR" id="S75289">
    <property type="entry name" value="S75289"/>
</dbReference>
<dbReference type="SMR" id="P73177"/>
<dbReference type="IntAct" id="P73177">
    <property type="interactions" value="1"/>
</dbReference>
<dbReference type="STRING" id="1148.gene:10498066"/>
<dbReference type="PaxDb" id="1148-1652280"/>
<dbReference type="EnsemblBacteria" id="BAA17203">
    <property type="protein sequence ID" value="BAA17203"/>
    <property type="gene ID" value="BAA17203"/>
</dbReference>
<dbReference type="KEGG" id="syn:sll1290"/>
<dbReference type="eggNOG" id="COG0557">
    <property type="taxonomic scope" value="Bacteria"/>
</dbReference>
<dbReference type="InParanoid" id="P73177"/>
<dbReference type="PhylomeDB" id="P73177"/>
<dbReference type="Proteomes" id="UP000001425">
    <property type="component" value="Chromosome"/>
</dbReference>
<dbReference type="GO" id="GO:0003723">
    <property type="term" value="F:RNA binding"/>
    <property type="evidence" value="ECO:0007669"/>
    <property type="project" value="InterPro"/>
</dbReference>
<dbReference type="GO" id="GO:0004540">
    <property type="term" value="F:RNA nuclease activity"/>
    <property type="evidence" value="ECO:0007669"/>
    <property type="project" value="InterPro"/>
</dbReference>
<dbReference type="InterPro" id="IPR056404">
    <property type="entry name" value="HTH_RNase_II"/>
</dbReference>
<dbReference type="InterPro" id="IPR012340">
    <property type="entry name" value="NA-bd_OB-fold"/>
</dbReference>
<dbReference type="InterPro" id="IPR001900">
    <property type="entry name" value="RNase_II/R"/>
</dbReference>
<dbReference type="InterPro" id="IPR056403">
    <property type="entry name" value="RNase_II_barrel"/>
</dbReference>
<dbReference type="InterPro" id="IPR050180">
    <property type="entry name" value="RNR_Ribonuclease"/>
</dbReference>
<dbReference type="PANTHER" id="PTHR23355">
    <property type="entry name" value="RIBONUCLEASE"/>
    <property type="match status" value="1"/>
</dbReference>
<dbReference type="PANTHER" id="PTHR23355:SF42">
    <property type="entry name" value="RIBONUCLEASE II, CHLOROPLASTIC_MITOCHONDRIAL"/>
    <property type="match status" value="1"/>
</dbReference>
<dbReference type="Pfam" id="PF23163">
    <property type="entry name" value="CSD_RNase_II"/>
    <property type="match status" value="1"/>
</dbReference>
<dbReference type="Pfam" id="PF23161">
    <property type="entry name" value="HTH_RNase_II"/>
    <property type="match status" value="1"/>
</dbReference>
<dbReference type="Pfam" id="PF00773">
    <property type="entry name" value="RNB"/>
    <property type="match status" value="1"/>
</dbReference>
<dbReference type="Pfam" id="PF25255">
    <property type="entry name" value="wH_RNase_II"/>
    <property type="match status" value="1"/>
</dbReference>
<dbReference type="SMART" id="SM00955">
    <property type="entry name" value="RNB"/>
    <property type="match status" value="1"/>
</dbReference>
<dbReference type="SUPFAM" id="SSF50249">
    <property type="entry name" value="Nucleic acid-binding proteins"/>
    <property type="match status" value="1"/>
</dbReference>
<keyword id="KW-0378">Hydrolase</keyword>
<keyword id="KW-0540">Nuclease</keyword>
<keyword id="KW-1185">Reference proteome</keyword>
<comment type="disruption phenotype">
    <text evidence="2">Essential, it cannot be deleted.</text>
</comment>
<comment type="similarity">
    <text evidence="3">Belongs to the RNR ribonuclease family.</text>
</comment>
<name>RN2H_SYNY3</name>
<accession>P73177</accession>
<evidence type="ECO:0000255" key="1"/>
<evidence type="ECO:0000269" key="2">
    <source>
    </source>
</evidence>
<evidence type="ECO:0000305" key="3"/>
<feature type="chain" id="PRO_0000166426" description="Uncharacterized ribonuclease sll1290">
    <location>
        <begin position="1"/>
        <end position="666"/>
    </location>
</feature>
<feature type="domain" description="RNB" evidence="1">
    <location>
        <begin position="263"/>
        <end position="553"/>
    </location>
</feature>
<proteinExistence type="inferred from homology"/>
<sequence>MEKGQLIEFRHQGERRLAVVDRPDGKKDWVVIDQQGQSHKLKPQRVEYEIPGGPYTVDDLPSFLGEVDQYLDPSSLEVAWELLIEEGESITPADLALLLFSEQSPSQCYAAHALLAEDKLYFKQKGNHYEPRPSSQIEEIKHQMRVQAQKEQEQQGFIDRVNQALAGEKVTWEGSDRLRLEALEKFILFPEQNHRQALDILQTLGKPGRTDETQNLLIELGIWQRHENLFLRRSAYPNQFPAKVSDVAHAYLTNPPPDPDQERFDLTTLKTYTIDDESTSEIDDGLSVETLADGGHRLWIHVADPTRLLSPNDELDLEARKRSTSLYLPTGMISMFPPELATGPMSLLQGQRCVALSFGVTLDEVGAVRDFTIAPSWVKPTYRLTYEDVDEMLVLKIQGEPELPLLAEAAKKRAQWRKSQGAITIKMPEAIIKVNADEEVQIYLQETSVSRQLVAEMMILAGEVAGRFCQEHGIPVPFRGQPQPELPSDEELLSLPPGPVRECAVRRCMPRSEVGITPSRHASLGLDLYSQATSPIRRYTDLITHFQMKAYLRGEPLPFSGEQVQEILYSVMPSSKEATLVERQTNRYWSLEFLRRNINEVWQGVMLRWLREDDGLGLILLEELGLELPHRFDRPISPGDRLSLKVSNADPHRDEIRFRELLANEA</sequence>
<protein>
    <recommendedName>
        <fullName>Uncharacterized ribonuclease sll1290</fullName>
        <ecNumber>3.1.-.-</ecNumber>
    </recommendedName>
</protein>
<gene>
    <name type="ordered locus">sll1290</name>
</gene>
<organism>
    <name type="scientific">Synechocystis sp. (strain ATCC 27184 / PCC 6803 / Kazusa)</name>
    <dbReference type="NCBI Taxonomy" id="1111708"/>
    <lineage>
        <taxon>Bacteria</taxon>
        <taxon>Bacillati</taxon>
        <taxon>Cyanobacteriota</taxon>
        <taxon>Cyanophyceae</taxon>
        <taxon>Synechococcales</taxon>
        <taxon>Merismopediaceae</taxon>
        <taxon>Synechocystis</taxon>
    </lineage>
</organism>
<reference key="1">
    <citation type="journal article" date="1996" name="DNA Res.">
        <title>Sequence analysis of the genome of the unicellular cyanobacterium Synechocystis sp. strain PCC6803. II. Sequence determination of the entire genome and assignment of potential protein-coding regions.</title>
        <authorList>
            <person name="Kaneko T."/>
            <person name="Sato S."/>
            <person name="Kotani H."/>
            <person name="Tanaka A."/>
            <person name="Asamizu E."/>
            <person name="Nakamura Y."/>
            <person name="Miyajima N."/>
            <person name="Hirosawa M."/>
            <person name="Sugiura M."/>
            <person name="Sasamoto S."/>
            <person name="Kimura T."/>
            <person name="Hosouchi T."/>
            <person name="Matsuno A."/>
            <person name="Muraki A."/>
            <person name="Nakazaki N."/>
            <person name="Naruo K."/>
            <person name="Okumura S."/>
            <person name="Shimpo S."/>
            <person name="Takeuchi C."/>
            <person name="Wada T."/>
            <person name="Watanabe A."/>
            <person name="Yamada M."/>
            <person name="Yasuda M."/>
            <person name="Tabata S."/>
        </authorList>
    </citation>
    <scope>NUCLEOTIDE SEQUENCE [LARGE SCALE GENOMIC DNA]</scope>
    <source>
        <strain>ATCC 27184 / PCC 6803 / Kazusa</strain>
    </source>
</reference>
<reference key="2">
    <citation type="journal article" date="2003" name="J. Biol. Chem.">
        <title>RNA polyadenylation and degradation in cyanobacteria are similar to the chloroplast but different from Escherichia coli.</title>
        <authorList>
            <person name="Rott R."/>
            <person name="Zipor G."/>
            <person name="Portnoy V."/>
            <person name="Liveanu V."/>
            <person name="Schuster G."/>
        </authorList>
    </citation>
    <scope>DISRUPTION PHENOTYPE</scope>
    <source>
        <strain>ATCC 27184 / PCC 6803 / Kazusa</strain>
    </source>
</reference>